<protein>
    <recommendedName>
        <fullName evidence="1">Large-conductance mechanosensitive channel</fullName>
    </recommendedName>
</protein>
<comment type="function">
    <text evidence="1">Channel that opens in response to stretch forces in the membrane lipid bilayer. May participate in the regulation of osmotic pressure changes within the cell.</text>
</comment>
<comment type="subunit">
    <text evidence="1">Homopentamer.</text>
</comment>
<comment type="subcellular location">
    <subcellularLocation>
        <location evidence="1">Cell inner membrane</location>
        <topology evidence="1">Multi-pass membrane protein</topology>
    </subcellularLocation>
</comment>
<comment type="similarity">
    <text evidence="1">Belongs to the MscL family.</text>
</comment>
<reference key="1">
    <citation type="journal article" date="2011" name="Stand. Genomic Sci.">
        <title>Complete genome sequence of 'Thioalkalivibrio sulfidophilus' HL-EbGr7.</title>
        <authorList>
            <person name="Muyzer G."/>
            <person name="Sorokin D.Y."/>
            <person name="Mavromatis K."/>
            <person name="Lapidus A."/>
            <person name="Clum A."/>
            <person name="Ivanova N."/>
            <person name="Pati A."/>
            <person name="d'Haeseleer P."/>
            <person name="Woyke T."/>
            <person name="Kyrpides N.C."/>
        </authorList>
    </citation>
    <scope>NUCLEOTIDE SEQUENCE [LARGE SCALE GENOMIC DNA]</scope>
    <source>
        <strain>HL-EbGR7</strain>
    </source>
</reference>
<gene>
    <name evidence="1" type="primary">mscL</name>
    <name type="ordered locus">Tgr7_2042</name>
</gene>
<organism>
    <name type="scientific">Thioalkalivibrio sulfidiphilus (strain HL-EbGR7)</name>
    <dbReference type="NCBI Taxonomy" id="396588"/>
    <lineage>
        <taxon>Bacteria</taxon>
        <taxon>Pseudomonadati</taxon>
        <taxon>Pseudomonadota</taxon>
        <taxon>Gammaproteobacteria</taxon>
        <taxon>Chromatiales</taxon>
        <taxon>Ectothiorhodospiraceae</taxon>
        <taxon>Thioalkalivibrio</taxon>
    </lineage>
</organism>
<proteinExistence type="inferred from homology"/>
<keyword id="KW-0997">Cell inner membrane</keyword>
<keyword id="KW-1003">Cell membrane</keyword>
<keyword id="KW-0407">Ion channel</keyword>
<keyword id="KW-0406">Ion transport</keyword>
<keyword id="KW-0472">Membrane</keyword>
<keyword id="KW-1185">Reference proteome</keyword>
<keyword id="KW-0812">Transmembrane</keyword>
<keyword id="KW-1133">Transmembrane helix</keyword>
<keyword id="KW-0813">Transport</keyword>
<sequence>MGMLKEFKEFAVKGNVVDMAVGIIIGVAFGKIVSSFVSDVIMPPLGLLIGGVDFSDLAITLQHAGEGVAEVTLRYGVFLQAIFDFIIIAFAIFIAVKAINTLKKKEEAAPPPAPPEPSSEEKLLAEIRDLLKQK</sequence>
<name>MSCL_THISH</name>
<accession>B8GTM8</accession>
<dbReference type="EMBL" id="CP001339">
    <property type="protein sequence ID" value="ACL73122.1"/>
    <property type="molecule type" value="Genomic_DNA"/>
</dbReference>
<dbReference type="RefSeq" id="WP_012638601.1">
    <property type="nucleotide sequence ID" value="NC_011901.1"/>
</dbReference>
<dbReference type="SMR" id="B8GTM8"/>
<dbReference type="STRING" id="396588.Tgr7_2042"/>
<dbReference type="KEGG" id="tgr:Tgr7_2042"/>
<dbReference type="eggNOG" id="COG1970">
    <property type="taxonomic scope" value="Bacteria"/>
</dbReference>
<dbReference type="HOGENOM" id="CLU_095787_0_0_6"/>
<dbReference type="OrthoDB" id="9810350at2"/>
<dbReference type="Proteomes" id="UP000002383">
    <property type="component" value="Chromosome"/>
</dbReference>
<dbReference type="GO" id="GO:0005886">
    <property type="term" value="C:plasma membrane"/>
    <property type="evidence" value="ECO:0007669"/>
    <property type="project" value="UniProtKB-SubCell"/>
</dbReference>
<dbReference type="GO" id="GO:0008381">
    <property type="term" value="F:mechanosensitive monoatomic ion channel activity"/>
    <property type="evidence" value="ECO:0007669"/>
    <property type="project" value="UniProtKB-UniRule"/>
</dbReference>
<dbReference type="FunFam" id="1.10.1200.120:FF:000001">
    <property type="entry name" value="Large-conductance mechanosensitive channel"/>
    <property type="match status" value="1"/>
</dbReference>
<dbReference type="Gene3D" id="1.10.1200.120">
    <property type="entry name" value="Large-conductance mechanosensitive channel, MscL, domain 1"/>
    <property type="match status" value="1"/>
</dbReference>
<dbReference type="HAMAP" id="MF_00115">
    <property type="entry name" value="MscL"/>
    <property type="match status" value="1"/>
</dbReference>
<dbReference type="InterPro" id="IPR019823">
    <property type="entry name" value="Mechanosensitive_channel_CS"/>
</dbReference>
<dbReference type="InterPro" id="IPR001185">
    <property type="entry name" value="MS_channel"/>
</dbReference>
<dbReference type="InterPro" id="IPR037673">
    <property type="entry name" value="MSC/AndL"/>
</dbReference>
<dbReference type="InterPro" id="IPR036019">
    <property type="entry name" value="MscL_channel"/>
</dbReference>
<dbReference type="NCBIfam" id="TIGR00220">
    <property type="entry name" value="mscL"/>
    <property type="match status" value="1"/>
</dbReference>
<dbReference type="NCBIfam" id="NF001843">
    <property type="entry name" value="PRK00567.1-4"/>
    <property type="match status" value="1"/>
</dbReference>
<dbReference type="PANTHER" id="PTHR30266:SF2">
    <property type="entry name" value="LARGE-CONDUCTANCE MECHANOSENSITIVE CHANNEL"/>
    <property type="match status" value="1"/>
</dbReference>
<dbReference type="PANTHER" id="PTHR30266">
    <property type="entry name" value="MECHANOSENSITIVE CHANNEL MSCL"/>
    <property type="match status" value="1"/>
</dbReference>
<dbReference type="Pfam" id="PF01741">
    <property type="entry name" value="MscL"/>
    <property type="match status" value="1"/>
</dbReference>
<dbReference type="PRINTS" id="PR01264">
    <property type="entry name" value="MECHCHANNEL"/>
</dbReference>
<dbReference type="SUPFAM" id="SSF81330">
    <property type="entry name" value="Gated mechanosensitive channel"/>
    <property type="match status" value="1"/>
</dbReference>
<dbReference type="PROSITE" id="PS01327">
    <property type="entry name" value="MSCL"/>
    <property type="match status" value="1"/>
</dbReference>
<evidence type="ECO:0000255" key="1">
    <source>
        <dbReference type="HAMAP-Rule" id="MF_00115"/>
    </source>
</evidence>
<feature type="chain" id="PRO_1000191387" description="Large-conductance mechanosensitive channel">
    <location>
        <begin position="1"/>
        <end position="134"/>
    </location>
</feature>
<feature type="transmembrane region" description="Helical" evidence="1">
    <location>
        <begin position="16"/>
        <end position="36"/>
    </location>
</feature>
<feature type="transmembrane region" description="Helical" evidence="1">
    <location>
        <begin position="76"/>
        <end position="96"/>
    </location>
</feature>